<sequence length="602" mass="67435">MKPYKIENIRNFSIIAHIDHGKSTIADRLLESTSTIEQREMREQLLDSMDLERERGITIKAHPVTMTYEYEGETYELNLIDTPGHVDFSYEVSRSLAACEGALLIVDAAQGVQAQSLANVYLALERDLEIIPVLNKIDLPAAQPEAIKKQIEEFIGLDTSNTIACSAKTGQGIPEILESIIRLVPPPKPPQETELKALIFDSHYDPYVGIMVYVRVISGEIKKGDRITFMATKGSSFEVLGIGAFLPEATLMEGSLRAGQVGYFIANLKKVKDVKIGDTVTTVKHPAKEPLEGFKEIKPVVFAGIYPIDSSDFDTLKDALGRLQLNDSALTIEQENSHSLGFGFRCGFLGLLHLEIIFERISREFDLDIIATAPSVIYKVVLKNGKTLFIDNPTAYPDPALIEHMEEPWVHVNIITPQEYLSNIMSLCMDKRGICLKTDMLDQHRLVLSYELPLNEIVSDFNDKLKSVTKGYGSFDYRLGDYKKGAIIKLEILINDEAVDAFSCLVHRDKAESKGRSICEKLVDVIPPQLFKIPIQAAINKKIIARETIRALAKNVTAKCYGGDITRKRKLWDKQKKGKKRMKEFGKVSIPNTAFVEVLKME</sequence>
<name>LEPA_CHLTR</name>
<keyword id="KW-0997">Cell inner membrane</keyword>
<keyword id="KW-1003">Cell membrane</keyword>
<keyword id="KW-0342">GTP-binding</keyword>
<keyword id="KW-0378">Hydrolase</keyword>
<keyword id="KW-0472">Membrane</keyword>
<keyword id="KW-0547">Nucleotide-binding</keyword>
<keyword id="KW-0648">Protein biosynthesis</keyword>
<keyword id="KW-1185">Reference proteome</keyword>
<gene>
    <name evidence="1" type="primary">lepA</name>
    <name type="ordered locus">CT_064</name>
</gene>
<comment type="function">
    <text evidence="1">Required for accurate and efficient protein synthesis under certain stress conditions. May act as a fidelity factor of the translation reaction, by catalyzing a one-codon backward translocation of tRNAs on improperly translocated ribosomes. Back-translocation proceeds from a post-translocation (POST) complex to a pre-translocation (PRE) complex, thus giving elongation factor G a second chance to translocate the tRNAs correctly. Binds to ribosomes in a GTP-dependent manner.</text>
</comment>
<comment type="catalytic activity">
    <reaction evidence="1">
        <text>GTP + H2O = GDP + phosphate + H(+)</text>
        <dbReference type="Rhea" id="RHEA:19669"/>
        <dbReference type="ChEBI" id="CHEBI:15377"/>
        <dbReference type="ChEBI" id="CHEBI:15378"/>
        <dbReference type="ChEBI" id="CHEBI:37565"/>
        <dbReference type="ChEBI" id="CHEBI:43474"/>
        <dbReference type="ChEBI" id="CHEBI:58189"/>
        <dbReference type="EC" id="3.6.5.n1"/>
    </reaction>
</comment>
<comment type="subcellular location">
    <subcellularLocation>
        <location evidence="1">Cell inner membrane</location>
        <topology evidence="1">Peripheral membrane protein</topology>
        <orientation evidence="1">Cytoplasmic side</orientation>
    </subcellularLocation>
</comment>
<comment type="similarity">
    <text evidence="1">Belongs to the TRAFAC class translation factor GTPase superfamily. Classic translation factor GTPase family. LepA subfamily.</text>
</comment>
<organism>
    <name type="scientific">Chlamydia trachomatis serovar D (strain ATCC VR-885 / DSM 19411 / UW-3/Cx)</name>
    <dbReference type="NCBI Taxonomy" id="272561"/>
    <lineage>
        <taxon>Bacteria</taxon>
        <taxon>Pseudomonadati</taxon>
        <taxon>Chlamydiota</taxon>
        <taxon>Chlamydiia</taxon>
        <taxon>Chlamydiales</taxon>
        <taxon>Chlamydiaceae</taxon>
        <taxon>Chlamydia/Chlamydophila group</taxon>
        <taxon>Chlamydia</taxon>
    </lineage>
</organism>
<accession>O84067</accession>
<protein>
    <recommendedName>
        <fullName evidence="1">Elongation factor 4</fullName>
        <shortName evidence="1">EF-4</shortName>
        <ecNumber evidence="1">3.6.5.n1</ecNumber>
    </recommendedName>
    <alternativeName>
        <fullName evidence="1">Ribosomal back-translocase LepA</fullName>
    </alternativeName>
</protein>
<reference key="1">
    <citation type="journal article" date="1998" name="Science">
        <title>Genome sequence of an obligate intracellular pathogen of humans: Chlamydia trachomatis.</title>
        <authorList>
            <person name="Stephens R.S."/>
            <person name="Kalman S."/>
            <person name="Lammel C.J."/>
            <person name="Fan J."/>
            <person name="Marathe R."/>
            <person name="Aravind L."/>
            <person name="Mitchell W.P."/>
            <person name="Olinger L."/>
            <person name="Tatusov R.L."/>
            <person name="Zhao Q."/>
            <person name="Koonin E.V."/>
            <person name="Davis R.W."/>
        </authorList>
    </citation>
    <scope>NUCLEOTIDE SEQUENCE [LARGE SCALE GENOMIC DNA]</scope>
    <source>
        <strain>ATCC VR-885 / DSM 19411 / UW-3/Cx</strain>
    </source>
</reference>
<proteinExistence type="inferred from homology"/>
<dbReference type="EC" id="3.6.5.n1" evidence="1"/>
<dbReference type="EMBL" id="AE001273">
    <property type="protein sequence ID" value="AAC67655.1"/>
    <property type="molecule type" value="Genomic_DNA"/>
</dbReference>
<dbReference type="PIR" id="B71561">
    <property type="entry name" value="B71561"/>
</dbReference>
<dbReference type="RefSeq" id="NP_219567.1">
    <property type="nucleotide sequence ID" value="NC_000117.1"/>
</dbReference>
<dbReference type="RefSeq" id="WP_009872356.1">
    <property type="nucleotide sequence ID" value="NC_000117.1"/>
</dbReference>
<dbReference type="SMR" id="O84067"/>
<dbReference type="FunCoup" id="O84067">
    <property type="interactions" value="252"/>
</dbReference>
<dbReference type="STRING" id="272561.CT_064"/>
<dbReference type="EnsemblBacteria" id="AAC67655">
    <property type="protein sequence ID" value="AAC67655"/>
    <property type="gene ID" value="CT_064"/>
</dbReference>
<dbReference type="GeneID" id="884077"/>
<dbReference type="KEGG" id="ctr:CT_064"/>
<dbReference type="PATRIC" id="fig|272561.5.peg.73"/>
<dbReference type="HOGENOM" id="CLU_009995_3_3_0"/>
<dbReference type="InParanoid" id="O84067"/>
<dbReference type="OrthoDB" id="9804431at2"/>
<dbReference type="Proteomes" id="UP000000431">
    <property type="component" value="Chromosome"/>
</dbReference>
<dbReference type="GO" id="GO:0005886">
    <property type="term" value="C:plasma membrane"/>
    <property type="evidence" value="ECO:0007669"/>
    <property type="project" value="UniProtKB-SubCell"/>
</dbReference>
<dbReference type="GO" id="GO:0005525">
    <property type="term" value="F:GTP binding"/>
    <property type="evidence" value="ECO:0007669"/>
    <property type="project" value="UniProtKB-UniRule"/>
</dbReference>
<dbReference type="GO" id="GO:0003924">
    <property type="term" value="F:GTPase activity"/>
    <property type="evidence" value="ECO:0007669"/>
    <property type="project" value="UniProtKB-UniRule"/>
</dbReference>
<dbReference type="GO" id="GO:0043022">
    <property type="term" value="F:ribosome binding"/>
    <property type="evidence" value="ECO:0000318"/>
    <property type="project" value="GO_Central"/>
</dbReference>
<dbReference type="GO" id="GO:0003746">
    <property type="term" value="F:translation elongation factor activity"/>
    <property type="evidence" value="ECO:0007669"/>
    <property type="project" value="UniProtKB-UniRule"/>
</dbReference>
<dbReference type="GO" id="GO:0045727">
    <property type="term" value="P:positive regulation of translation"/>
    <property type="evidence" value="ECO:0000318"/>
    <property type="project" value="GO_Central"/>
</dbReference>
<dbReference type="CDD" id="cd03699">
    <property type="entry name" value="EF4_II"/>
    <property type="match status" value="1"/>
</dbReference>
<dbReference type="CDD" id="cd16260">
    <property type="entry name" value="EF4_III"/>
    <property type="match status" value="1"/>
</dbReference>
<dbReference type="CDD" id="cd01890">
    <property type="entry name" value="LepA"/>
    <property type="match status" value="1"/>
</dbReference>
<dbReference type="CDD" id="cd03709">
    <property type="entry name" value="lepA_C"/>
    <property type="match status" value="1"/>
</dbReference>
<dbReference type="FunFam" id="3.40.50.300:FF:000078">
    <property type="entry name" value="Elongation factor 4"/>
    <property type="match status" value="1"/>
</dbReference>
<dbReference type="FunFam" id="2.40.30.10:FF:000015">
    <property type="entry name" value="Translation factor GUF1, mitochondrial"/>
    <property type="match status" value="1"/>
</dbReference>
<dbReference type="FunFam" id="3.30.70.240:FF:000007">
    <property type="entry name" value="Translation factor GUF1, mitochondrial"/>
    <property type="match status" value="1"/>
</dbReference>
<dbReference type="FunFam" id="3.30.70.2570:FF:000001">
    <property type="entry name" value="Translation factor GUF1, mitochondrial"/>
    <property type="match status" value="1"/>
</dbReference>
<dbReference type="FunFam" id="3.30.70.870:FF:000004">
    <property type="entry name" value="Translation factor GUF1, mitochondrial"/>
    <property type="match status" value="1"/>
</dbReference>
<dbReference type="Gene3D" id="3.30.70.240">
    <property type="match status" value="1"/>
</dbReference>
<dbReference type="Gene3D" id="3.30.70.2570">
    <property type="entry name" value="Elongation factor 4, C-terminal domain"/>
    <property type="match status" value="1"/>
</dbReference>
<dbReference type="Gene3D" id="3.30.70.870">
    <property type="entry name" value="Elongation Factor G (Translational Gtpase), domain 3"/>
    <property type="match status" value="1"/>
</dbReference>
<dbReference type="Gene3D" id="3.40.50.300">
    <property type="entry name" value="P-loop containing nucleotide triphosphate hydrolases"/>
    <property type="match status" value="1"/>
</dbReference>
<dbReference type="Gene3D" id="2.40.30.10">
    <property type="entry name" value="Translation factors"/>
    <property type="match status" value="1"/>
</dbReference>
<dbReference type="HAMAP" id="MF_00071">
    <property type="entry name" value="LepA"/>
    <property type="match status" value="1"/>
</dbReference>
<dbReference type="InterPro" id="IPR006297">
    <property type="entry name" value="EF-4"/>
</dbReference>
<dbReference type="InterPro" id="IPR035647">
    <property type="entry name" value="EFG_III/V"/>
</dbReference>
<dbReference type="InterPro" id="IPR000640">
    <property type="entry name" value="EFG_V-like"/>
</dbReference>
<dbReference type="InterPro" id="IPR004161">
    <property type="entry name" value="EFTu-like_2"/>
</dbReference>
<dbReference type="InterPro" id="IPR038363">
    <property type="entry name" value="LepA_C_sf"/>
</dbReference>
<dbReference type="InterPro" id="IPR013842">
    <property type="entry name" value="LepA_CTD"/>
</dbReference>
<dbReference type="InterPro" id="IPR035654">
    <property type="entry name" value="LepA_IV"/>
</dbReference>
<dbReference type="InterPro" id="IPR027417">
    <property type="entry name" value="P-loop_NTPase"/>
</dbReference>
<dbReference type="InterPro" id="IPR005225">
    <property type="entry name" value="Small_GTP-bd"/>
</dbReference>
<dbReference type="InterPro" id="IPR000795">
    <property type="entry name" value="T_Tr_GTP-bd_dom"/>
</dbReference>
<dbReference type="InterPro" id="IPR009000">
    <property type="entry name" value="Transl_B-barrel_sf"/>
</dbReference>
<dbReference type="NCBIfam" id="TIGR01393">
    <property type="entry name" value="lepA"/>
    <property type="match status" value="1"/>
</dbReference>
<dbReference type="NCBIfam" id="TIGR00231">
    <property type="entry name" value="small_GTP"/>
    <property type="match status" value="1"/>
</dbReference>
<dbReference type="PANTHER" id="PTHR43512:SF4">
    <property type="entry name" value="TRANSLATION FACTOR GUF1 HOMOLOG, CHLOROPLASTIC"/>
    <property type="match status" value="1"/>
</dbReference>
<dbReference type="PANTHER" id="PTHR43512">
    <property type="entry name" value="TRANSLATION FACTOR GUF1-RELATED"/>
    <property type="match status" value="1"/>
</dbReference>
<dbReference type="Pfam" id="PF00679">
    <property type="entry name" value="EFG_C"/>
    <property type="match status" value="1"/>
</dbReference>
<dbReference type="Pfam" id="PF00009">
    <property type="entry name" value="GTP_EFTU"/>
    <property type="match status" value="1"/>
</dbReference>
<dbReference type="Pfam" id="PF03144">
    <property type="entry name" value="GTP_EFTU_D2"/>
    <property type="match status" value="1"/>
</dbReference>
<dbReference type="Pfam" id="PF06421">
    <property type="entry name" value="LepA_C"/>
    <property type="match status" value="1"/>
</dbReference>
<dbReference type="PRINTS" id="PR00315">
    <property type="entry name" value="ELONGATNFCT"/>
</dbReference>
<dbReference type="SUPFAM" id="SSF54980">
    <property type="entry name" value="EF-G C-terminal domain-like"/>
    <property type="match status" value="2"/>
</dbReference>
<dbReference type="SUPFAM" id="SSF52540">
    <property type="entry name" value="P-loop containing nucleoside triphosphate hydrolases"/>
    <property type="match status" value="1"/>
</dbReference>
<dbReference type="SUPFAM" id="SSF50447">
    <property type="entry name" value="Translation proteins"/>
    <property type="match status" value="1"/>
</dbReference>
<dbReference type="PROSITE" id="PS51722">
    <property type="entry name" value="G_TR_2"/>
    <property type="match status" value="1"/>
</dbReference>
<feature type="chain" id="PRO_0000176259" description="Elongation factor 4">
    <location>
        <begin position="1"/>
        <end position="602"/>
    </location>
</feature>
<feature type="domain" description="tr-type G">
    <location>
        <begin position="7"/>
        <end position="188"/>
    </location>
</feature>
<feature type="binding site" evidence="1">
    <location>
        <begin position="19"/>
        <end position="24"/>
    </location>
    <ligand>
        <name>GTP</name>
        <dbReference type="ChEBI" id="CHEBI:37565"/>
    </ligand>
</feature>
<feature type="binding site" evidence="1">
    <location>
        <begin position="135"/>
        <end position="138"/>
    </location>
    <ligand>
        <name>GTP</name>
        <dbReference type="ChEBI" id="CHEBI:37565"/>
    </ligand>
</feature>
<evidence type="ECO:0000255" key="1">
    <source>
        <dbReference type="HAMAP-Rule" id="MF_00071"/>
    </source>
</evidence>